<proteinExistence type="evidence at protein level"/>
<reference key="1">
    <citation type="journal article" date="1999" name="Genetics">
        <title>Divergence of the hyperthermophilic archaea Pyrococcus furiosus and P. horikoshii inferred from complete genomic sequences.</title>
        <authorList>
            <person name="Maeder D.L."/>
            <person name="Weiss R.B."/>
            <person name="Dunn D.M."/>
            <person name="Cherry J.L."/>
            <person name="Gonzalez J.M."/>
            <person name="DiRuggiero J."/>
            <person name="Robb F.T."/>
        </authorList>
    </citation>
    <scope>NUCLEOTIDE SEQUENCE [LARGE SCALE GENOMIC DNA]</scope>
    <source>
        <strain>ATCC 43587 / DSM 3638 / JCM 8422 / Vc1</strain>
    </source>
</reference>
<reference evidence="3" key="2">
    <citation type="journal article" date="2013" name="Nucleic Acids Res.">
        <title>Promiscuous behaviour of archaeal ribosomal proteins: implications for eukaryotic ribosome evolution.</title>
        <authorList>
            <person name="Armache J.P."/>
            <person name="Anger A.M."/>
            <person name="Marquez V."/>
            <person name="Franckenberg S."/>
            <person name="Frohlich T."/>
            <person name="Villa E."/>
            <person name="Berninghausen O."/>
            <person name="Thomm M."/>
            <person name="Arnold G.J."/>
            <person name="Beckmann R."/>
            <person name="Wilson D.N."/>
        </authorList>
    </citation>
    <scope>STRUCTURE BY ELECTRON MICROSCOPY (6.60 ANGSTROMS) IN THE 70S RIBOSOME</scope>
    <scope>SUBUNIT</scope>
</reference>
<keyword id="KW-0002">3D-structure</keyword>
<keyword id="KW-1185">Reference proteome</keyword>
<keyword id="KW-0687">Ribonucleoprotein</keyword>
<keyword id="KW-0689">Ribosomal protein</keyword>
<keyword id="KW-0694">RNA-binding</keyword>
<keyword id="KW-0699">rRNA-binding</keyword>
<organism>
    <name type="scientific">Pyrococcus furiosus (strain ATCC 43587 / DSM 3638 / JCM 8422 / Vc1)</name>
    <dbReference type="NCBI Taxonomy" id="186497"/>
    <lineage>
        <taxon>Archaea</taxon>
        <taxon>Methanobacteriati</taxon>
        <taxon>Methanobacteriota</taxon>
        <taxon>Thermococci</taxon>
        <taxon>Thermococcales</taxon>
        <taxon>Thermococcaceae</taxon>
        <taxon>Pyrococcus</taxon>
    </lineage>
</organism>
<accession>Q8U015</accession>
<comment type="function">
    <text evidence="1">This protein binds to the 23S rRNA, and is important in its secondary structure. It is located near the subunit interface in the base of the L7/L12 stalk, and near the tRNA binding site of the peptidyltransferase center.</text>
</comment>
<comment type="subunit">
    <text evidence="1 2">Part of the 50S ribosomal subunit.</text>
</comment>
<comment type="similarity">
    <text evidence="1">Belongs to the universal ribosomal protein uL6 family.</text>
</comment>
<protein>
    <recommendedName>
        <fullName evidence="1">Large ribosomal subunit protein uL6</fullName>
    </recommendedName>
    <alternativeName>
        <fullName>50S ribosomal protein L6</fullName>
    </alternativeName>
</protein>
<name>RL6_PYRFU</name>
<evidence type="ECO:0000255" key="1">
    <source>
        <dbReference type="HAMAP-Rule" id="MF_01365"/>
    </source>
</evidence>
<evidence type="ECO:0000269" key="2">
    <source>
    </source>
</evidence>
<evidence type="ECO:0007744" key="3">
    <source>
        <dbReference type="PDB" id="4V6U"/>
    </source>
</evidence>
<feature type="chain" id="PRO_0000260996" description="Large ribosomal subunit protein uL6">
    <location>
        <begin position="1"/>
        <end position="184"/>
    </location>
</feature>
<sequence>MPVDAWIREEVEIPEGVEVTVEGYKVKVKGPKGELEREFFWPGIQIFTEDGNVVIYKDFPRRKDVAIARTFAAHIRNMIKGVTEGFTYKLKVVYSHFPISVKVQGDEVIIENFLGEKAPRKAKILPGVTVKVRGQEIIVEGIDKEAVGQTAANIEQATRITKWDRRIFQDGIYIVEKAGKPITF</sequence>
<gene>
    <name evidence="1" type="primary">rpl6</name>
    <name type="ordered locus">PF1808</name>
</gene>
<dbReference type="EMBL" id="AE009950">
    <property type="protein sequence ID" value="AAL81932.1"/>
    <property type="molecule type" value="Genomic_DNA"/>
</dbReference>
<dbReference type="RefSeq" id="WP_011012949.1">
    <property type="nucleotide sequence ID" value="NZ_CP023154.1"/>
</dbReference>
<dbReference type="PDB" id="4V4N">
    <property type="method" value="EM"/>
    <property type="resolution" value="9.00 A"/>
    <property type="chains" value="F=1-184"/>
</dbReference>
<dbReference type="PDB" id="4V6U">
    <property type="method" value="EM"/>
    <property type="resolution" value="6.60 A"/>
    <property type="chains" value="BF=1-184"/>
</dbReference>
<dbReference type="PDBsum" id="4V4N"/>
<dbReference type="PDBsum" id="4V6U"/>
<dbReference type="SMR" id="Q8U015"/>
<dbReference type="STRING" id="186497.PF1808"/>
<dbReference type="PaxDb" id="186497-PF1808"/>
<dbReference type="KEGG" id="pfu:PF1808"/>
<dbReference type="PATRIC" id="fig|186497.12.peg.1879"/>
<dbReference type="eggNOG" id="arCOG04090">
    <property type="taxonomic scope" value="Archaea"/>
</dbReference>
<dbReference type="HOGENOM" id="CLU_065464_0_0_2"/>
<dbReference type="OrthoDB" id="7144at2157"/>
<dbReference type="PhylomeDB" id="Q8U015"/>
<dbReference type="Proteomes" id="UP000001013">
    <property type="component" value="Chromosome"/>
</dbReference>
<dbReference type="GO" id="GO:0022625">
    <property type="term" value="C:cytosolic large ribosomal subunit"/>
    <property type="evidence" value="ECO:0007669"/>
    <property type="project" value="TreeGrafter"/>
</dbReference>
<dbReference type="GO" id="GO:0019843">
    <property type="term" value="F:rRNA binding"/>
    <property type="evidence" value="ECO:0007669"/>
    <property type="project" value="UniProtKB-UniRule"/>
</dbReference>
<dbReference type="GO" id="GO:0003735">
    <property type="term" value="F:structural constituent of ribosome"/>
    <property type="evidence" value="ECO:0007669"/>
    <property type="project" value="InterPro"/>
</dbReference>
<dbReference type="GO" id="GO:0002181">
    <property type="term" value="P:cytoplasmic translation"/>
    <property type="evidence" value="ECO:0007669"/>
    <property type="project" value="TreeGrafter"/>
</dbReference>
<dbReference type="FunFam" id="3.90.930.12:FF:000008">
    <property type="entry name" value="50S ribosomal protein L6"/>
    <property type="match status" value="1"/>
</dbReference>
<dbReference type="FunFam" id="3.90.930.12:FF:000004">
    <property type="entry name" value="60S ribosomal protein L9"/>
    <property type="match status" value="1"/>
</dbReference>
<dbReference type="Gene3D" id="3.90.930.12">
    <property type="entry name" value="Ribosomal protein L6, alpha-beta domain"/>
    <property type="match status" value="2"/>
</dbReference>
<dbReference type="HAMAP" id="MF_01365_A">
    <property type="entry name" value="Ribosomal_uL6_A"/>
    <property type="match status" value="1"/>
</dbReference>
<dbReference type="InterPro" id="IPR000702">
    <property type="entry name" value="Ribosomal_uL6-like"/>
</dbReference>
<dbReference type="InterPro" id="IPR036789">
    <property type="entry name" value="Ribosomal_uL6-like_a/b-dom_sf"/>
</dbReference>
<dbReference type="InterPro" id="IPR020040">
    <property type="entry name" value="Ribosomal_uL6_a/b-dom"/>
</dbReference>
<dbReference type="InterPro" id="IPR019907">
    <property type="entry name" value="Ribosomal_uL6_arc"/>
</dbReference>
<dbReference type="InterPro" id="IPR002359">
    <property type="entry name" value="Ribosomal_uL6_CS2"/>
</dbReference>
<dbReference type="NCBIfam" id="NF004037">
    <property type="entry name" value="PRK05518.1"/>
    <property type="match status" value="1"/>
</dbReference>
<dbReference type="NCBIfam" id="TIGR03653">
    <property type="entry name" value="uL6_arch"/>
    <property type="match status" value="1"/>
</dbReference>
<dbReference type="PANTHER" id="PTHR11655:SF16">
    <property type="entry name" value="60S RIBOSOMAL PROTEIN L9"/>
    <property type="match status" value="1"/>
</dbReference>
<dbReference type="PANTHER" id="PTHR11655">
    <property type="entry name" value="60S/50S RIBOSOMAL PROTEIN L6/L9"/>
    <property type="match status" value="1"/>
</dbReference>
<dbReference type="Pfam" id="PF00347">
    <property type="entry name" value="Ribosomal_L6"/>
    <property type="match status" value="2"/>
</dbReference>
<dbReference type="PIRSF" id="PIRSF002162">
    <property type="entry name" value="Ribosomal_L6"/>
    <property type="match status" value="1"/>
</dbReference>
<dbReference type="SUPFAM" id="SSF56053">
    <property type="entry name" value="Ribosomal protein L6"/>
    <property type="match status" value="2"/>
</dbReference>
<dbReference type="PROSITE" id="PS00700">
    <property type="entry name" value="RIBOSOMAL_L6_2"/>
    <property type="match status" value="1"/>
</dbReference>